<reference key="1">
    <citation type="submission" date="2006-12" db="EMBL/GenBank/DDBJ databases">
        <title>Complete sequence of chromosome 1 of Paracoccus denitrificans PD1222.</title>
        <authorList>
            <person name="Copeland A."/>
            <person name="Lucas S."/>
            <person name="Lapidus A."/>
            <person name="Barry K."/>
            <person name="Detter J.C."/>
            <person name="Glavina del Rio T."/>
            <person name="Hammon N."/>
            <person name="Israni S."/>
            <person name="Dalin E."/>
            <person name="Tice H."/>
            <person name="Pitluck S."/>
            <person name="Munk A.C."/>
            <person name="Brettin T."/>
            <person name="Bruce D."/>
            <person name="Han C."/>
            <person name="Tapia R."/>
            <person name="Gilna P."/>
            <person name="Schmutz J."/>
            <person name="Larimer F."/>
            <person name="Land M."/>
            <person name="Hauser L."/>
            <person name="Kyrpides N."/>
            <person name="Lykidis A."/>
            <person name="Spiro S."/>
            <person name="Richardson D.J."/>
            <person name="Moir J.W.B."/>
            <person name="Ferguson S.J."/>
            <person name="van Spanning R.J.M."/>
            <person name="Richardson P."/>
        </authorList>
    </citation>
    <scope>NUCLEOTIDE SEQUENCE [LARGE SCALE GENOMIC DNA]</scope>
    <source>
        <strain>Pd 1222</strain>
    </source>
</reference>
<evidence type="ECO:0000255" key="1">
    <source>
        <dbReference type="HAMAP-Rule" id="MF_00031"/>
    </source>
</evidence>
<name>RUVA_PARDP</name>
<protein>
    <recommendedName>
        <fullName evidence="1">Holliday junction branch migration complex subunit RuvA</fullName>
    </recommendedName>
</protein>
<organism>
    <name type="scientific">Paracoccus denitrificans (strain Pd 1222)</name>
    <dbReference type="NCBI Taxonomy" id="318586"/>
    <lineage>
        <taxon>Bacteria</taxon>
        <taxon>Pseudomonadati</taxon>
        <taxon>Pseudomonadota</taxon>
        <taxon>Alphaproteobacteria</taxon>
        <taxon>Rhodobacterales</taxon>
        <taxon>Paracoccaceae</taxon>
        <taxon>Paracoccus</taxon>
    </lineage>
</organism>
<proteinExistence type="inferred from homology"/>
<accession>A1AZW3</accession>
<feature type="chain" id="PRO_1000002507" description="Holliday junction branch migration complex subunit RuvA">
    <location>
        <begin position="1"/>
        <end position="223"/>
    </location>
</feature>
<feature type="region of interest" description="Domain I" evidence="1">
    <location>
        <begin position="1"/>
        <end position="64"/>
    </location>
</feature>
<feature type="region of interest" description="Domain II" evidence="1">
    <location>
        <begin position="65"/>
        <end position="143"/>
    </location>
</feature>
<feature type="region of interest" description="Flexible linker" evidence="1">
    <location>
        <begin position="144"/>
        <end position="169"/>
    </location>
</feature>
<feature type="region of interest" description="Domain III" evidence="1">
    <location>
        <begin position="170"/>
        <end position="223"/>
    </location>
</feature>
<gene>
    <name evidence="1" type="primary">ruvA</name>
    <name type="ordered locus">Pden_0695</name>
</gene>
<sequence>MIGRIAGVILHRAQDHVLIDVRGVGYIVHVSERTAANLPPAGQATALYTELLVREDLLQLFGFPTLLEKEWHRLLTSVQGVGAKVALAILGTLGPDGLSRALALGDWSALRKAPGVGPKLAQRVVMELKDKAPAVMALGGALTVDPGPLPEVELVEAAVPAPVPAKAAPSSAQATADALSALGNLGYAPSEAASAVAEAAAREPAAPTAALIRAALRLLAPKE</sequence>
<dbReference type="EMBL" id="CP000489">
    <property type="protein sequence ID" value="ABL68807.1"/>
    <property type="molecule type" value="Genomic_DNA"/>
</dbReference>
<dbReference type="RefSeq" id="WP_011747040.1">
    <property type="nucleotide sequence ID" value="NC_008686.1"/>
</dbReference>
<dbReference type="SMR" id="A1AZW3"/>
<dbReference type="STRING" id="318586.Pden_0695"/>
<dbReference type="EnsemblBacteria" id="ABL68807">
    <property type="protein sequence ID" value="ABL68807"/>
    <property type="gene ID" value="Pden_0695"/>
</dbReference>
<dbReference type="GeneID" id="93451919"/>
<dbReference type="KEGG" id="pde:Pden_0695"/>
<dbReference type="eggNOG" id="COG0632">
    <property type="taxonomic scope" value="Bacteria"/>
</dbReference>
<dbReference type="HOGENOM" id="CLU_087936_3_0_5"/>
<dbReference type="OrthoDB" id="5293449at2"/>
<dbReference type="Proteomes" id="UP000000361">
    <property type="component" value="Chromosome 1"/>
</dbReference>
<dbReference type="GO" id="GO:0005737">
    <property type="term" value="C:cytoplasm"/>
    <property type="evidence" value="ECO:0007669"/>
    <property type="project" value="UniProtKB-SubCell"/>
</dbReference>
<dbReference type="GO" id="GO:0009379">
    <property type="term" value="C:Holliday junction helicase complex"/>
    <property type="evidence" value="ECO:0007669"/>
    <property type="project" value="InterPro"/>
</dbReference>
<dbReference type="GO" id="GO:0048476">
    <property type="term" value="C:Holliday junction resolvase complex"/>
    <property type="evidence" value="ECO:0007669"/>
    <property type="project" value="UniProtKB-UniRule"/>
</dbReference>
<dbReference type="GO" id="GO:0005524">
    <property type="term" value="F:ATP binding"/>
    <property type="evidence" value="ECO:0007669"/>
    <property type="project" value="InterPro"/>
</dbReference>
<dbReference type="GO" id="GO:0000400">
    <property type="term" value="F:four-way junction DNA binding"/>
    <property type="evidence" value="ECO:0007669"/>
    <property type="project" value="UniProtKB-UniRule"/>
</dbReference>
<dbReference type="GO" id="GO:0009378">
    <property type="term" value="F:four-way junction helicase activity"/>
    <property type="evidence" value="ECO:0007669"/>
    <property type="project" value="InterPro"/>
</dbReference>
<dbReference type="GO" id="GO:0006310">
    <property type="term" value="P:DNA recombination"/>
    <property type="evidence" value="ECO:0007669"/>
    <property type="project" value="UniProtKB-UniRule"/>
</dbReference>
<dbReference type="GO" id="GO:0006281">
    <property type="term" value="P:DNA repair"/>
    <property type="evidence" value="ECO:0007669"/>
    <property type="project" value="UniProtKB-UniRule"/>
</dbReference>
<dbReference type="Gene3D" id="1.10.150.20">
    <property type="entry name" value="5' to 3' exonuclease, C-terminal subdomain"/>
    <property type="match status" value="1"/>
</dbReference>
<dbReference type="Gene3D" id="1.10.8.10">
    <property type="entry name" value="DNA helicase RuvA subunit, C-terminal domain"/>
    <property type="match status" value="1"/>
</dbReference>
<dbReference type="Gene3D" id="2.40.50.140">
    <property type="entry name" value="Nucleic acid-binding proteins"/>
    <property type="match status" value="1"/>
</dbReference>
<dbReference type="HAMAP" id="MF_00031">
    <property type="entry name" value="DNA_HJ_migration_RuvA"/>
    <property type="match status" value="1"/>
</dbReference>
<dbReference type="InterPro" id="IPR013849">
    <property type="entry name" value="DNA_helicase_Holl-junc_RuvA_I"/>
</dbReference>
<dbReference type="InterPro" id="IPR003583">
    <property type="entry name" value="Hlx-hairpin-Hlx_DNA-bd_motif"/>
</dbReference>
<dbReference type="InterPro" id="IPR012340">
    <property type="entry name" value="NA-bd_OB-fold"/>
</dbReference>
<dbReference type="InterPro" id="IPR000085">
    <property type="entry name" value="RuvA"/>
</dbReference>
<dbReference type="InterPro" id="IPR010994">
    <property type="entry name" value="RuvA_2-like"/>
</dbReference>
<dbReference type="InterPro" id="IPR011114">
    <property type="entry name" value="RuvA_C"/>
</dbReference>
<dbReference type="InterPro" id="IPR036267">
    <property type="entry name" value="RuvA_C_sf"/>
</dbReference>
<dbReference type="NCBIfam" id="TIGR00084">
    <property type="entry name" value="ruvA"/>
    <property type="match status" value="1"/>
</dbReference>
<dbReference type="Pfam" id="PF14520">
    <property type="entry name" value="HHH_5"/>
    <property type="match status" value="1"/>
</dbReference>
<dbReference type="Pfam" id="PF07499">
    <property type="entry name" value="RuvA_C"/>
    <property type="match status" value="1"/>
</dbReference>
<dbReference type="Pfam" id="PF01330">
    <property type="entry name" value="RuvA_N"/>
    <property type="match status" value="1"/>
</dbReference>
<dbReference type="SMART" id="SM00278">
    <property type="entry name" value="HhH1"/>
    <property type="match status" value="2"/>
</dbReference>
<dbReference type="SUPFAM" id="SSF46929">
    <property type="entry name" value="DNA helicase RuvA subunit, C-terminal domain"/>
    <property type="match status" value="1"/>
</dbReference>
<dbReference type="SUPFAM" id="SSF50249">
    <property type="entry name" value="Nucleic acid-binding proteins"/>
    <property type="match status" value="1"/>
</dbReference>
<dbReference type="SUPFAM" id="SSF47781">
    <property type="entry name" value="RuvA domain 2-like"/>
    <property type="match status" value="1"/>
</dbReference>
<comment type="function">
    <text evidence="1">The RuvA-RuvB-RuvC complex processes Holliday junction (HJ) DNA during genetic recombination and DNA repair, while the RuvA-RuvB complex plays an important role in the rescue of blocked DNA replication forks via replication fork reversal (RFR). RuvA specifically binds to HJ cruciform DNA, conferring on it an open structure. The RuvB hexamer acts as an ATP-dependent pump, pulling dsDNA into and through the RuvAB complex. HJ branch migration allows RuvC to scan DNA until it finds its consensus sequence, where it cleaves and resolves the cruciform DNA.</text>
</comment>
<comment type="subunit">
    <text evidence="1">Homotetramer. Forms an RuvA(8)-RuvB(12)-Holliday junction (HJ) complex. HJ DNA is sandwiched between 2 RuvA tetramers; dsDNA enters through RuvA and exits via RuvB. An RuvB hexamer assembles on each DNA strand where it exits the tetramer. Each RuvB hexamer is contacted by two RuvA subunits (via domain III) on 2 adjacent RuvB subunits; this complex drives branch migration. In the full resolvosome a probable DNA-RuvA(4)-RuvB(12)-RuvC(2) complex forms which resolves the HJ.</text>
</comment>
<comment type="subcellular location">
    <subcellularLocation>
        <location evidence="1">Cytoplasm</location>
    </subcellularLocation>
</comment>
<comment type="domain">
    <text evidence="1">Has three domains with a flexible linker between the domains II and III and assumes an 'L' shape. Domain III is highly mobile and contacts RuvB.</text>
</comment>
<comment type="similarity">
    <text evidence="1">Belongs to the RuvA family.</text>
</comment>
<keyword id="KW-0963">Cytoplasm</keyword>
<keyword id="KW-0227">DNA damage</keyword>
<keyword id="KW-0233">DNA recombination</keyword>
<keyword id="KW-0234">DNA repair</keyword>
<keyword id="KW-0238">DNA-binding</keyword>
<keyword id="KW-1185">Reference proteome</keyword>